<protein>
    <recommendedName>
        <fullName evidence="1">Protein translocase subunit SecA 1</fullName>
        <ecNumber evidence="1">7.4.2.8</ecNumber>
    </recommendedName>
</protein>
<accession>Q97PD6</accession>
<proteinExistence type="inferred from homology"/>
<reference key="1">
    <citation type="journal article" date="2001" name="Science">
        <title>Complete genome sequence of a virulent isolate of Streptococcus pneumoniae.</title>
        <authorList>
            <person name="Tettelin H."/>
            <person name="Nelson K.E."/>
            <person name="Paulsen I.T."/>
            <person name="Eisen J.A."/>
            <person name="Read T.D."/>
            <person name="Peterson S.N."/>
            <person name="Heidelberg J.F."/>
            <person name="DeBoy R.T."/>
            <person name="Haft D.H."/>
            <person name="Dodson R.J."/>
            <person name="Durkin A.S."/>
            <person name="Gwinn M.L."/>
            <person name="Kolonay J.F."/>
            <person name="Nelson W.C."/>
            <person name="Peterson J.D."/>
            <person name="Umayam L.A."/>
            <person name="White O."/>
            <person name="Salzberg S.L."/>
            <person name="Lewis M.R."/>
            <person name="Radune D."/>
            <person name="Holtzapple E.K."/>
            <person name="Khouri H.M."/>
            <person name="Wolf A.M."/>
            <person name="Utterback T.R."/>
            <person name="Hansen C.L."/>
            <person name="McDonald L.A."/>
            <person name="Feldblyum T.V."/>
            <person name="Angiuoli S.V."/>
            <person name="Dickinson T."/>
            <person name="Hickey E.K."/>
            <person name="Holt I.E."/>
            <person name="Loftus B.J."/>
            <person name="Yang F."/>
            <person name="Smith H.O."/>
            <person name="Venter J.C."/>
            <person name="Dougherty B.A."/>
            <person name="Morrison D.A."/>
            <person name="Hollingshead S.K."/>
            <person name="Fraser C.M."/>
        </authorList>
    </citation>
    <scope>NUCLEOTIDE SEQUENCE [LARGE SCALE GENOMIC DNA]</scope>
    <source>
        <strain>ATCC BAA-334 / TIGR4</strain>
    </source>
</reference>
<evidence type="ECO:0000255" key="1">
    <source>
        <dbReference type="HAMAP-Rule" id="MF_01382"/>
    </source>
</evidence>
<keyword id="KW-0067">ATP-binding</keyword>
<keyword id="KW-1003">Cell membrane</keyword>
<keyword id="KW-0963">Cytoplasm</keyword>
<keyword id="KW-0472">Membrane</keyword>
<keyword id="KW-0479">Metal-binding</keyword>
<keyword id="KW-0547">Nucleotide-binding</keyword>
<keyword id="KW-0653">Protein transport</keyword>
<keyword id="KW-1185">Reference proteome</keyword>
<keyword id="KW-1278">Translocase</keyword>
<keyword id="KW-0811">Translocation</keyword>
<keyword id="KW-0813">Transport</keyword>
<keyword id="KW-0862">Zinc</keyword>
<name>SECA1_STRPN</name>
<sequence length="837" mass="95046">MANILKTIIENDKGEIRRLEKMADKVFKYEDQMAALTDDQLKAKTVEFKERYQNGESLDSLLYEAFAVVREGAKRVLGLFPYKVQVMGGIVLHHGDVPEMRTGEGKTLTATMPVYLNALSGKGVHVVTVNEYLSERDATEMGELYSWLGLSVGINLATKSPMEKKEAYECDITYSTNSEIGFDYLRDNMVVRAENMVQRPLNYALVDEVDSILIDEARTPLIVSGANAVETSQLYHMADHYVKSLNKDDYIIDVQSKTIGLSDSGIDRAESYFKLENLYDIENVALTHFIDNALRANYIMLLDIDYVVSEEQEILIVDQFTGRTMEGRRYSDGLHQAIEAKEGVPIQDETKTSASITYQNLFRMYKKLSGMTGTGKTEEEEFREIYNIRVIPIPTNRPVQRIDHSDLLYASIESKFKAVVEDVKARYQKGQPVLVGTVAVETSDYISKKLVAAGVPHEVLNAKNHYREAQIIMNAGQRGAVTIATNMAGRGTDIKLGEGVRELGGLCVIGTERHESRRIDNQLRGRSGRQGDPGESQFYLSLEDDLMKRFGSERLKGIFERLNMSEEAIESRMLTRQVEAAQKRVEGNNYDTRKQVLQYDDVMREQREIIYAQRYDVITADRDLAPEIQSMIKRTIERVVDGHARAKQDEKLEAILNFAKYNLLPEDSITMEDLSGLSDKAIKEELFQRSLKVYDSQVSKLRDEEAVKEFQKVLILRVVDNKWTDHIDALDQLRNAVGLRGYAQNNPVVEYQAEGFRMFNDMIGSIEFDVTRLMMKAQIHEQERPQAERHISTTATRNIAAHQASMPEDLDLSQIGRNELCPCGSGKKFKNCHGKRQ</sequence>
<feature type="chain" id="PRO_0000318442" description="Protein translocase subunit SecA 1">
    <location>
        <begin position="1"/>
        <end position="837"/>
    </location>
</feature>
<feature type="binding site" evidence="1">
    <location>
        <position position="85"/>
    </location>
    <ligand>
        <name>ATP</name>
        <dbReference type="ChEBI" id="CHEBI:30616"/>
    </ligand>
</feature>
<feature type="binding site" evidence="1">
    <location>
        <begin position="103"/>
        <end position="107"/>
    </location>
    <ligand>
        <name>ATP</name>
        <dbReference type="ChEBI" id="CHEBI:30616"/>
    </ligand>
</feature>
<feature type="binding site" evidence="1">
    <location>
        <position position="493"/>
    </location>
    <ligand>
        <name>ATP</name>
        <dbReference type="ChEBI" id="CHEBI:30616"/>
    </ligand>
</feature>
<feature type="binding site" evidence="1">
    <location>
        <position position="821"/>
    </location>
    <ligand>
        <name>Zn(2+)</name>
        <dbReference type="ChEBI" id="CHEBI:29105"/>
    </ligand>
</feature>
<feature type="binding site" evidence="1">
    <location>
        <position position="823"/>
    </location>
    <ligand>
        <name>Zn(2+)</name>
        <dbReference type="ChEBI" id="CHEBI:29105"/>
    </ligand>
</feature>
<feature type="binding site" evidence="1">
    <location>
        <position position="832"/>
    </location>
    <ligand>
        <name>Zn(2+)</name>
        <dbReference type="ChEBI" id="CHEBI:29105"/>
    </ligand>
</feature>
<feature type="binding site" evidence="1">
    <location>
        <position position="833"/>
    </location>
    <ligand>
        <name>Zn(2+)</name>
        <dbReference type="ChEBI" id="CHEBI:29105"/>
    </ligand>
</feature>
<comment type="function">
    <text evidence="1">Part of the Sec protein translocase complex. Interacts with the SecYEG preprotein conducting channel. Has a central role in coupling the hydrolysis of ATP to the transfer of proteins into and across the cell membrane, serving as an ATP-driven molecular motor driving the stepwise translocation of polypeptide chains across the membrane.</text>
</comment>
<comment type="catalytic activity">
    <reaction evidence="1">
        <text>ATP + H2O + cellular proteinSide 1 = ADP + phosphate + cellular proteinSide 2.</text>
        <dbReference type="EC" id="7.4.2.8"/>
    </reaction>
</comment>
<comment type="cofactor">
    <cofactor evidence="1">
        <name>Zn(2+)</name>
        <dbReference type="ChEBI" id="CHEBI:29105"/>
    </cofactor>
    <text evidence="1">May bind 1 zinc ion per subunit.</text>
</comment>
<comment type="subunit">
    <text evidence="1">Monomer and homodimer. Part of the essential Sec protein translocation apparatus which comprises SecA, SecYEG and auxiliary proteins SecDF. Other proteins may also be involved.</text>
</comment>
<comment type="subcellular location">
    <subcellularLocation>
        <location evidence="1">Cell membrane</location>
        <topology evidence="1">Peripheral membrane protein</topology>
        <orientation evidence="1">Cytoplasmic side</orientation>
    </subcellularLocation>
    <subcellularLocation>
        <location evidence="1">Cytoplasm</location>
    </subcellularLocation>
    <text evidence="1">Distribution is 50-50.</text>
</comment>
<comment type="similarity">
    <text evidence="1">Belongs to the SecA family.</text>
</comment>
<gene>
    <name evidence="1" type="primary">secA1</name>
    <name type="ordered locus">SP_1702</name>
</gene>
<dbReference type="EC" id="7.4.2.8" evidence="1"/>
<dbReference type="EMBL" id="AE005672">
    <property type="protein sequence ID" value="AAK75780.1"/>
    <property type="molecule type" value="Genomic_DNA"/>
</dbReference>
<dbReference type="PIR" id="C95198">
    <property type="entry name" value="C95198"/>
</dbReference>
<dbReference type="SMR" id="Q97PD6"/>
<dbReference type="PaxDb" id="170187-SP_1702"/>
<dbReference type="EnsemblBacteria" id="AAK75780">
    <property type="protein sequence ID" value="AAK75780"/>
    <property type="gene ID" value="SP_1702"/>
</dbReference>
<dbReference type="KEGG" id="spn:SP_1702"/>
<dbReference type="eggNOG" id="COG0653">
    <property type="taxonomic scope" value="Bacteria"/>
</dbReference>
<dbReference type="PhylomeDB" id="Q97PD6"/>
<dbReference type="BioCyc" id="SPNE170187:G1FZB-1725-MONOMER"/>
<dbReference type="Proteomes" id="UP000000585">
    <property type="component" value="Chromosome"/>
</dbReference>
<dbReference type="GO" id="GO:0031522">
    <property type="term" value="C:cell envelope Sec protein transport complex"/>
    <property type="evidence" value="ECO:0007669"/>
    <property type="project" value="TreeGrafter"/>
</dbReference>
<dbReference type="GO" id="GO:0005829">
    <property type="term" value="C:cytosol"/>
    <property type="evidence" value="ECO:0007669"/>
    <property type="project" value="TreeGrafter"/>
</dbReference>
<dbReference type="GO" id="GO:0005886">
    <property type="term" value="C:plasma membrane"/>
    <property type="evidence" value="ECO:0007669"/>
    <property type="project" value="UniProtKB-SubCell"/>
</dbReference>
<dbReference type="GO" id="GO:0005524">
    <property type="term" value="F:ATP binding"/>
    <property type="evidence" value="ECO:0007669"/>
    <property type="project" value="UniProtKB-UniRule"/>
</dbReference>
<dbReference type="GO" id="GO:0046872">
    <property type="term" value="F:metal ion binding"/>
    <property type="evidence" value="ECO:0007669"/>
    <property type="project" value="UniProtKB-KW"/>
</dbReference>
<dbReference type="GO" id="GO:0008564">
    <property type="term" value="F:protein-exporting ATPase activity"/>
    <property type="evidence" value="ECO:0007669"/>
    <property type="project" value="UniProtKB-EC"/>
</dbReference>
<dbReference type="GO" id="GO:0065002">
    <property type="term" value="P:intracellular protein transmembrane transport"/>
    <property type="evidence" value="ECO:0007669"/>
    <property type="project" value="UniProtKB-UniRule"/>
</dbReference>
<dbReference type="GO" id="GO:0017038">
    <property type="term" value="P:protein import"/>
    <property type="evidence" value="ECO:0007669"/>
    <property type="project" value="InterPro"/>
</dbReference>
<dbReference type="GO" id="GO:0006605">
    <property type="term" value="P:protein targeting"/>
    <property type="evidence" value="ECO:0007669"/>
    <property type="project" value="UniProtKB-UniRule"/>
</dbReference>
<dbReference type="GO" id="GO:0043952">
    <property type="term" value="P:protein transport by the Sec complex"/>
    <property type="evidence" value="ECO:0007669"/>
    <property type="project" value="TreeGrafter"/>
</dbReference>
<dbReference type="CDD" id="cd17928">
    <property type="entry name" value="DEXDc_SecA"/>
    <property type="match status" value="1"/>
</dbReference>
<dbReference type="CDD" id="cd18803">
    <property type="entry name" value="SF2_C_secA"/>
    <property type="match status" value="1"/>
</dbReference>
<dbReference type="FunFam" id="1.10.3060.10:FF:000002">
    <property type="entry name" value="Preprotein translocase subunit SecA"/>
    <property type="match status" value="1"/>
</dbReference>
<dbReference type="FunFam" id="3.40.50.300:FF:000429">
    <property type="entry name" value="Preprotein translocase subunit SecA"/>
    <property type="match status" value="1"/>
</dbReference>
<dbReference type="FunFam" id="3.90.1440.10:FF:000001">
    <property type="entry name" value="Preprotein translocase subunit SecA"/>
    <property type="match status" value="1"/>
</dbReference>
<dbReference type="Gene3D" id="1.10.3060.10">
    <property type="entry name" value="Helical scaffold and wing domains of SecA"/>
    <property type="match status" value="1"/>
</dbReference>
<dbReference type="Gene3D" id="3.40.50.300">
    <property type="entry name" value="P-loop containing nucleotide triphosphate hydrolases"/>
    <property type="match status" value="3"/>
</dbReference>
<dbReference type="Gene3D" id="3.90.1440.10">
    <property type="entry name" value="SecA, preprotein cross-linking domain"/>
    <property type="match status" value="1"/>
</dbReference>
<dbReference type="HAMAP" id="MF_01382">
    <property type="entry name" value="SecA"/>
    <property type="match status" value="1"/>
</dbReference>
<dbReference type="InterPro" id="IPR014001">
    <property type="entry name" value="Helicase_ATP-bd"/>
</dbReference>
<dbReference type="InterPro" id="IPR001650">
    <property type="entry name" value="Helicase_C-like"/>
</dbReference>
<dbReference type="InterPro" id="IPR027417">
    <property type="entry name" value="P-loop_NTPase"/>
</dbReference>
<dbReference type="InterPro" id="IPR004027">
    <property type="entry name" value="SEC_C_motif"/>
</dbReference>
<dbReference type="InterPro" id="IPR000185">
    <property type="entry name" value="SecA"/>
</dbReference>
<dbReference type="InterPro" id="IPR020937">
    <property type="entry name" value="SecA_CS"/>
</dbReference>
<dbReference type="InterPro" id="IPR011115">
    <property type="entry name" value="SecA_DEAD"/>
</dbReference>
<dbReference type="InterPro" id="IPR014018">
    <property type="entry name" value="SecA_motor_DEAD"/>
</dbReference>
<dbReference type="InterPro" id="IPR011130">
    <property type="entry name" value="SecA_preprotein_X-link_dom"/>
</dbReference>
<dbReference type="InterPro" id="IPR044722">
    <property type="entry name" value="SecA_SF2_C"/>
</dbReference>
<dbReference type="InterPro" id="IPR011116">
    <property type="entry name" value="SecA_Wing/Scaffold"/>
</dbReference>
<dbReference type="InterPro" id="IPR036266">
    <property type="entry name" value="SecA_Wing/Scaffold_sf"/>
</dbReference>
<dbReference type="InterPro" id="IPR036670">
    <property type="entry name" value="SecA_X-link_sf"/>
</dbReference>
<dbReference type="NCBIfam" id="NF006630">
    <property type="entry name" value="PRK09200.1"/>
    <property type="match status" value="1"/>
</dbReference>
<dbReference type="NCBIfam" id="TIGR00963">
    <property type="entry name" value="secA"/>
    <property type="match status" value="1"/>
</dbReference>
<dbReference type="PANTHER" id="PTHR30612:SF0">
    <property type="entry name" value="CHLOROPLAST PROTEIN-TRANSPORTING ATPASE"/>
    <property type="match status" value="1"/>
</dbReference>
<dbReference type="PANTHER" id="PTHR30612">
    <property type="entry name" value="SECA INNER MEMBRANE COMPONENT OF SEC PROTEIN SECRETION SYSTEM"/>
    <property type="match status" value="1"/>
</dbReference>
<dbReference type="Pfam" id="PF21090">
    <property type="entry name" value="P-loop_SecA"/>
    <property type="match status" value="2"/>
</dbReference>
<dbReference type="Pfam" id="PF02810">
    <property type="entry name" value="SEC-C"/>
    <property type="match status" value="1"/>
</dbReference>
<dbReference type="Pfam" id="PF07517">
    <property type="entry name" value="SecA_DEAD"/>
    <property type="match status" value="1"/>
</dbReference>
<dbReference type="Pfam" id="PF01043">
    <property type="entry name" value="SecA_PP_bind"/>
    <property type="match status" value="1"/>
</dbReference>
<dbReference type="Pfam" id="PF07516">
    <property type="entry name" value="SecA_SW"/>
    <property type="match status" value="1"/>
</dbReference>
<dbReference type="PRINTS" id="PR00906">
    <property type="entry name" value="SECA"/>
</dbReference>
<dbReference type="SMART" id="SM00957">
    <property type="entry name" value="SecA_DEAD"/>
    <property type="match status" value="1"/>
</dbReference>
<dbReference type="SMART" id="SM00958">
    <property type="entry name" value="SecA_PP_bind"/>
    <property type="match status" value="1"/>
</dbReference>
<dbReference type="SUPFAM" id="SSF81886">
    <property type="entry name" value="Helical scaffold and wing domains of SecA"/>
    <property type="match status" value="1"/>
</dbReference>
<dbReference type="SUPFAM" id="SSF52540">
    <property type="entry name" value="P-loop containing nucleoside triphosphate hydrolases"/>
    <property type="match status" value="2"/>
</dbReference>
<dbReference type="SUPFAM" id="SSF81767">
    <property type="entry name" value="Pre-protein crosslinking domain of SecA"/>
    <property type="match status" value="1"/>
</dbReference>
<dbReference type="PROSITE" id="PS01312">
    <property type="entry name" value="SECA"/>
    <property type="match status" value="1"/>
</dbReference>
<dbReference type="PROSITE" id="PS51196">
    <property type="entry name" value="SECA_MOTOR_DEAD"/>
    <property type="match status" value="1"/>
</dbReference>
<organism>
    <name type="scientific">Streptococcus pneumoniae serotype 4 (strain ATCC BAA-334 / TIGR4)</name>
    <dbReference type="NCBI Taxonomy" id="170187"/>
    <lineage>
        <taxon>Bacteria</taxon>
        <taxon>Bacillati</taxon>
        <taxon>Bacillota</taxon>
        <taxon>Bacilli</taxon>
        <taxon>Lactobacillales</taxon>
        <taxon>Streptococcaceae</taxon>
        <taxon>Streptococcus</taxon>
    </lineage>
</organism>